<organism>
    <name type="scientific">Crocosphaera subtropica (strain ATCC 51142 / BH68)</name>
    <name type="common">Cyanothece sp. (strain ATCC 51142)</name>
    <dbReference type="NCBI Taxonomy" id="43989"/>
    <lineage>
        <taxon>Bacteria</taxon>
        <taxon>Bacillati</taxon>
        <taxon>Cyanobacteriota</taxon>
        <taxon>Cyanophyceae</taxon>
        <taxon>Oscillatoriophycideae</taxon>
        <taxon>Chroococcales</taxon>
        <taxon>Aphanothecaceae</taxon>
        <taxon>Crocosphaera</taxon>
        <taxon>Crocosphaera subtropica</taxon>
    </lineage>
</organism>
<sequence>MQTLETPQTTSKPEFDTTIHRRKTRPVKVGDITIGGGFPVVVQSMINEDTLDIEGSVSAIRRLHEMGCEIVRVTVPSMAHAKALATIKEKLAQVYQPVPLVADVHHNGLKIALEVAKHVDKVRINPGLYVFEKPSPTRSEYTQAEFEEIGEKIRQTLEPLVISLRDQGKAMRIGVNHGSLAERMLFTYGDTPEGMVESALEFIRICESLDFYNIVISLKASRVPVMLAAYRLMVKRMDELGMDYPLHLGVTEAGDGEYGRIKSTAGIGTLLAEGIGDTIRVSLTEAPEKEIPVCYSILQALGLRKTMVEYVACPSCGRTLFNLEEVLHKVREATKHLTGLDIAVMGCIVNGPGEMADADYGYVGKQAGYISLYRGREEIKKVPEDQGVEELINLIKADGRWIDP</sequence>
<keyword id="KW-0004">4Fe-4S</keyword>
<keyword id="KW-0408">Iron</keyword>
<keyword id="KW-0411">Iron-sulfur</keyword>
<keyword id="KW-0414">Isoprene biosynthesis</keyword>
<keyword id="KW-0479">Metal-binding</keyword>
<keyword id="KW-0560">Oxidoreductase</keyword>
<keyword id="KW-1185">Reference proteome</keyword>
<reference key="1">
    <citation type="journal article" date="2008" name="Proc. Natl. Acad. Sci. U.S.A.">
        <title>The genome of Cyanothece 51142, a unicellular diazotrophic cyanobacterium important in the marine nitrogen cycle.</title>
        <authorList>
            <person name="Welsh E.A."/>
            <person name="Liberton M."/>
            <person name="Stoeckel J."/>
            <person name="Loh T."/>
            <person name="Elvitigala T."/>
            <person name="Wang C."/>
            <person name="Wollam A."/>
            <person name="Fulton R.S."/>
            <person name="Clifton S.W."/>
            <person name="Jacobs J.M."/>
            <person name="Aurora R."/>
            <person name="Ghosh B.K."/>
            <person name="Sherman L.A."/>
            <person name="Smith R.D."/>
            <person name="Wilson R.K."/>
            <person name="Pakrasi H.B."/>
        </authorList>
    </citation>
    <scope>NUCLEOTIDE SEQUENCE [LARGE SCALE GENOMIC DNA]</scope>
    <source>
        <strain>ATCC 51142 / BH68</strain>
    </source>
</reference>
<feature type="chain" id="PRO_1000097156" description="4-hydroxy-3-methylbut-2-en-1-yl diphosphate synthase (ferredoxin)">
    <location>
        <begin position="1"/>
        <end position="404"/>
    </location>
</feature>
<feature type="binding site" evidence="1">
    <location>
        <position position="313"/>
    </location>
    <ligand>
        <name>[4Fe-4S] cluster</name>
        <dbReference type="ChEBI" id="CHEBI:49883"/>
    </ligand>
</feature>
<feature type="binding site" evidence="1">
    <location>
        <position position="316"/>
    </location>
    <ligand>
        <name>[4Fe-4S] cluster</name>
        <dbReference type="ChEBI" id="CHEBI:49883"/>
    </ligand>
</feature>
<feature type="binding site" evidence="1">
    <location>
        <position position="347"/>
    </location>
    <ligand>
        <name>[4Fe-4S] cluster</name>
        <dbReference type="ChEBI" id="CHEBI:49883"/>
    </ligand>
</feature>
<feature type="binding site" evidence="1">
    <location>
        <position position="354"/>
    </location>
    <ligand>
        <name>[4Fe-4S] cluster</name>
        <dbReference type="ChEBI" id="CHEBI:49883"/>
    </ligand>
</feature>
<comment type="function">
    <text evidence="1">Converts 2C-methyl-D-erythritol 2,4-cyclodiphosphate (ME-2,4cPP) into 1-hydroxy-2-methyl-2-(E)-butenyl 4-diphosphate.</text>
</comment>
<comment type="catalytic activity">
    <reaction evidence="1">
        <text>(2E)-4-hydroxy-3-methylbut-2-enyl diphosphate + 2 oxidized [2Fe-2S]-[ferredoxin] + H2O = 2-C-methyl-D-erythritol 2,4-cyclic diphosphate + 2 reduced [2Fe-2S]-[ferredoxin] + H(+)</text>
        <dbReference type="Rhea" id="RHEA:26119"/>
        <dbReference type="Rhea" id="RHEA-COMP:10000"/>
        <dbReference type="Rhea" id="RHEA-COMP:10001"/>
        <dbReference type="ChEBI" id="CHEBI:15377"/>
        <dbReference type="ChEBI" id="CHEBI:15378"/>
        <dbReference type="ChEBI" id="CHEBI:33737"/>
        <dbReference type="ChEBI" id="CHEBI:33738"/>
        <dbReference type="ChEBI" id="CHEBI:58483"/>
        <dbReference type="ChEBI" id="CHEBI:128753"/>
        <dbReference type="EC" id="1.17.7.1"/>
    </reaction>
</comment>
<comment type="cofactor">
    <cofactor evidence="1">
        <name>[4Fe-4S] cluster</name>
        <dbReference type="ChEBI" id="CHEBI:49883"/>
    </cofactor>
    <text evidence="1">Binds 1 [4Fe-4S] cluster.</text>
</comment>
<comment type="pathway">
    <text evidence="1">Isoprenoid biosynthesis; isopentenyl diphosphate biosynthesis via DXP pathway; isopentenyl diphosphate from 1-deoxy-D-xylulose 5-phosphate: step 5/6.</text>
</comment>
<comment type="similarity">
    <text evidence="1">Belongs to the IspG family.</text>
</comment>
<name>ISPG_CROS5</name>
<protein>
    <recommendedName>
        <fullName evidence="1">4-hydroxy-3-methylbut-2-en-1-yl diphosphate synthase (ferredoxin)</fullName>
        <ecNumber evidence="1">1.17.7.1</ecNumber>
    </recommendedName>
    <alternativeName>
        <fullName evidence="1">1-hydroxy-2-methyl-2-(E)-butenyl 4-diphosphate synthase</fullName>
    </alternativeName>
</protein>
<dbReference type="EC" id="1.17.7.1" evidence="1"/>
<dbReference type="EMBL" id="CP000806">
    <property type="protein sequence ID" value="ACB51662.1"/>
    <property type="molecule type" value="Genomic_DNA"/>
</dbReference>
<dbReference type="RefSeq" id="WP_009544989.1">
    <property type="nucleotide sequence ID" value="NC_010546.1"/>
</dbReference>
<dbReference type="SMR" id="B1WQF1"/>
<dbReference type="STRING" id="43989.cce_2312"/>
<dbReference type="KEGG" id="cyt:cce_2312"/>
<dbReference type="eggNOG" id="COG0821">
    <property type="taxonomic scope" value="Bacteria"/>
</dbReference>
<dbReference type="HOGENOM" id="CLU_042258_0_0_3"/>
<dbReference type="OrthoDB" id="9803214at2"/>
<dbReference type="UniPathway" id="UPA00056">
    <property type="reaction ID" value="UER00096"/>
</dbReference>
<dbReference type="Proteomes" id="UP000001203">
    <property type="component" value="Chromosome circular"/>
</dbReference>
<dbReference type="GO" id="GO:0051539">
    <property type="term" value="F:4 iron, 4 sulfur cluster binding"/>
    <property type="evidence" value="ECO:0007669"/>
    <property type="project" value="UniProtKB-UniRule"/>
</dbReference>
<dbReference type="GO" id="GO:0046429">
    <property type="term" value="F:4-hydroxy-3-methylbut-2-en-1-yl diphosphate synthase activity (ferredoxin)"/>
    <property type="evidence" value="ECO:0007669"/>
    <property type="project" value="UniProtKB-UniRule"/>
</dbReference>
<dbReference type="GO" id="GO:0005506">
    <property type="term" value="F:iron ion binding"/>
    <property type="evidence" value="ECO:0007669"/>
    <property type="project" value="InterPro"/>
</dbReference>
<dbReference type="GO" id="GO:0019288">
    <property type="term" value="P:isopentenyl diphosphate biosynthetic process, methylerythritol 4-phosphate pathway"/>
    <property type="evidence" value="ECO:0007669"/>
    <property type="project" value="UniProtKB-UniRule"/>
</dbReference>
<dbReference type="GO" id="GO:0016114">
    <property type="term" value="P:terpenoid biosynthetic process"/>
    <property type="evidence" value="ECO:0007669"/>
    <property type="project" value="InterPro"/>
</dbReference>
<dbReference type="FunFam" id="3.20.20.20:FF:000005">
    <property type="entry name" value="4-hydroxy-3-methylbut-2-en-1-yl diphosphate synthase (flavodoxin)"/>
    <property type="match status" value="1"/>
</dbReference>
<dbReference type="FunFam" id="3.30.413.10:FF:000006">
    <property type="entry name" value="4-hydroxy-3-methylbut-2-en-1-yl diphosphate synthase (flavodoxin)"/>
    <property type="match status" value="1"/>
</dbReference>
<dbReference type="Gene3D" id="3.20.20.20">
    <property type="entry name" value="Dihydropteroate synthase-like"/>
    <property type="match status" value="1"/>
</dbReference>
<dbReference type="Gene3D" id="3.30.413.10">
    <property type="entry name" value="Sulfite Reductase Hemoprotein, domain 1"/>
    <property type="match status" value="1"/>
</dbReference>
<dbReference type="HAMAP" id="MF_00159">
    <property type="entry name" value="IspG"/>
    <property type="match status" value="1"/>
</dbReference>
<dbReference type="InterPro" id="IPR011005">
    <property type="entry name" value="Dihydropteroate_synth-like_sf"/>
</dbReference>
<dbReference type="InterPro" id="IPR016425">
    <property type="entry name" value="IspG_bac"/>
</dbReference>
<dbReference type="InterPro" id="IPR004588">
    <property type="entry name" value="IspG_bac-typ"/>
</dbReference>
<dbReference type="InterPro" id="IPR045854">
    <property type="entry name" value="NO2/SO3_Rdtase_4Fe4S_sf"/>
</dbReference>
<dbReference type="NCBIfam" id="TIGR00612">
    <property type="entry name" value="ispG_gcpE"/>
    <property type="match status" value="1"/>
</dbReference>
<dbReference type="NCBIfam" id="NF001540">
    <property type="entry name" value="PRK00366.1"/>
    <property type="match status" value="1"/>
</dbReference>
<dbReference type="PANTHER" id="PTHR30454">
    <property type="entry name" value="4-HYDROXY-3-METHYLBUT-2-EN-1-YL DIPHOSPHATE SYNTHASE"/>
    <property type="match status" value="1"/>
</dbReference>
<dbReference type="PANTHER" id="PTHR30454:SF0">
    <property type="entry name" value="4-HYDROXY-3-METHYLBUT-2-EN-1-YL DIPHOSPHATE SYNTHASE (FERREDOXIN), CHLOROPLASTIC"/>
    <property type="match status" value="1"/>
</dbReference>
<dbReference type="Pfam" id="PF04551">
    <property type="entry name" value="GcpE"/>
    <property type="match status" value="1"/>
</dbReference>
<dbReference type="PIRSF" id="PIRSF004640">
    <property type="entry name" value="IspG"/>
    <property type="match status" value="1"/>
</dbReference>
<dbReference type="SUPFAM" id="SSF56014">
    <property type="entry name" value="Nitrite and sulphite reductase 4Fe-4S domain-like"/>
    <property type="match status" value="1"/>
</dbReference>
<proteinExistence type="inferred from homology"/>
<accession>B1WQF1</accession>
<evidence type="ECO:0000255" key="1">
    <source>
        <dbReference type="HAMAP-Rule" id="MF_00159"/>
    </source>
</evidence>
<gene>
    <name evidence="1" type="primary">ispG</name>
    <name type="ordered locus">cce_2312</name>
</gene>